<feature type="chain" id="PRO_0000221121" description="4-galactosyl-N-acetylglucosaminide 3-alpha-L-fucosyltransferase 9">
    <location>
        <begin position="1"/>
        <end position="359"/>
    </location>
</feature>
<feature type="topological domain" description="Cytoplasmic" evidence="4">
    <location>
        <begin position="1"/>
        <end position="11"/>
    </location>
</feature>
<feature type="transmembrane region" description="Helical; Signal-anchor for type II membrane protein" evidence="4">
    <location>
        <begin position="12"/>
        <end position="32"/>
    </location>
</feature>
<feature type="topological domain" description="Lumenal" evidence="4">
    <location>
        <begin position="33"/>
        <end position="359"/>
    </location>
</feature>
<feature type="region of interest" description="Acceptor-binding" evidence="3">
    <location>
        <begin position="63"/>
        <end position="168"/>
    </location>
</feature>
<feature type="region of interest" description="Donor-binding" evidence="3">
    <location>
        <begin position="169"/>
        <end position="326"/>
    </location>
</feature>
<feature type="region of interest" description="Acceptor-binding" evidence="3">
    <location>
        <begin position="327"/>
        <end position="359"/>
    </location>
</feature>
<feature type="active site" description="Nucleophile" evidence="3">
    <location>
        <position position="137"/>
    </location>
</feature>
<feature type="binding site" evidence="3">
    <location>
        <position position="75"/>
    </location>
    <ligand>
        <name>a beta-D-galactosyl-(1-&gt;4)-N-acetyl-beta-D-glucosaminyl derivative</name>
        <dbReference type="ChEBI" id="CHEBI:133507"/>
    </ligand>
</feature>
<feature type="binding site" evidence="3">
    <location>
        <position position="137"/>
    </location>
    <ligand>
        <name>a beta-D-galactosyl-(1-&gt;4)-N-acetyl-beta-D-glucosaminyl derivative</name>
        <dbReference type="ChEBI" id="CHEBI:133507"/>
    </ligand>
</feature>
<feature type="binding site" evidence="3">
    <location>
        <position position="137"/>
    </location>
    <ligand>
        <name>GDP-beta-L-fucose</name>
        <dbReference type="ChEBI" id="CHEBI:57273"/>
    </ligand>
</feature>
<feature type="binding site" evidence="3">
    <location>
        <position position="168"/>
    </location>
    <ligand>
        <name>GDP-beta-L-fucose</name>
        <dbReference type="ChEBI" id="CHEBI:57273"/>
    </ligand>
</feature>
<feature type="binding site" evidence="3">
    <location>
        <position position="192"/>
    </location>
    <ligand>
        <name>GDP-beta-L-fucose</name>
        <dbReference type="ChEBI" id="CHEBI:57273"/>
    </ligand>
</feature>
<feature type="binding site" evidence="3">
    <location>
        <position position="194"/>
    </location>
    <ligand>
        <name>GDP-beta-L-fucose</name>
        <dbReference type="ChEBI" id="CHEBI:57273"/>
    </ligand>
</feature>
<feature type="binding site" evidence="3">
    <location>
        <position position="195"/>
    </location>
    <ligand>
        <name>GDP-beta-L-fucose</name>
        <dbReference type="ChEBI" id="CHEBI:57273"/>
    </ligand>
</feature>
<feature type="binding site" evidence="3">
    <location>
        <position position="202"/>
    </location>
    <ligand>
        <name>GDP-beta-L-fucose</name>
        <dbReference type="ChEBI" id="CHEBI:57273"/>
    </ligand>
</feature>
<feature type="binding site" evidence="3">
    <location>
        <position position="226"/>
    </location>
    <ligand>
        <name>GDP-beta-L-fucose</name>
        <dbReference type="ChEBI" id="CHEBI:57273"/>
    </ligand>
</feature>
<feature type="binding site" evidence="3">
    <location>
        <position position="241"/>
    </location>
    <ligand>
        <name>GDP-beta-L-fucose</name>
        <dbReference type="ChEBI" id="CHEBI:57273"/>
    </ligand>
</feature>
<feature type="binding site" evidence="3">
    <location>
        <position position="246"/>
    </location>
    <ligand>
        <name>GDP-beta-L-fucose</name>
        <dbReference type="ChEBI" id="CHEBI:57273"/>
    </ligand>
</feature>
<feature type="binding site" evidence="3">
    <location>
        <position position="252"/>
    </location>
    <ligand>
        <name>GDP-beta-L-fucose</name>
        <dbReference type="ChEBI" id="CHEBI:57273"/>
    </ligand>
</feature>
<feature type="binding site" evidence="3">
    <location>
        <position position="255"/>
    </location>
    <ligand>
        <name>GDP-beta-L-fucose</name>
        <dbReference type="ChEBI" id="CHEBI:57273"/>
    </ligand>
</feature>
<feature type="binding site" evidence="3">
    <location>
        <position position="256"/>
    </location>
    <ligand>
        <name>GDP-beta-L-fucose</name>
        <dbReference type="ChEBI" id="CHEBI:57273"/>
    </ligand>
</feature>
<feature type="glycosylation site" description="N-linked (GlcNAc...) asparagine" evidence="4">
    <location>
        <position position="62"/>
    </location>
</feature>
<feature type="glycosylation site" description="N-linked (GlcNAc...) asparagine" evidence="4">
    <location>
        <position position="101"/>
    </location>
</feature>
<feature type="glycosylation site" description="N-linked (GlcNAc...) asparagine" evidence="3 4">
    <location>
        <position position="153"/>
    </location>
</feature>
<feature type="disulfide bond" evidence="3">
    <location>
        <begin position="82"/>
        <end position="335"/>
    </location>
</feature>
<feature type="disulfide bond" evidence="3">
    <location>
        <begin position="91"/>
        <end position="338"/>
    </location>
</feature>
<feature type="disulfide bond" evidence="3">
    <location>
        <begin position="190"/>
        <end position="238"/>
    </location>
</feature>
<keyword id="KW-1015">Disulfide bond</keyword>
<keyword id="KW-0325">Glycoprotein</keyword>
<keyword id="KW-0328">Glycosyltransferase</keyword>
<keyword id="KW-0333">Golgi apparatus</keyword>
<keyword id="KW-0443">Lipid metabolism</keyword>
<keyword id="KW-0472">Membrane</keyword>
<keyword id="KW-1185">Reference proteome</keyword>
<keyword id="KW-0735">Signal-anchor</keyword>
<keyword id="KW-0808">Transferase</keyword>
<keyword id="KW-0812">Transmembrane</keyword>
<keyword id="KW-1133">Transmembrane helix</keyword>
<organism>
    <name type="scientific">Rattus norvegicus</name>
    <name type="common">Rat</name>
    <dbReference type="NCBI Taxonomy" id="10116"/>
    <lineage>
        <taxon>Eukaryota</taxon>
        <taxon>Metazoa</taxon>
        <taxon>Chordata</taxon>
        <taxon>Craniata</taxon>
        <taxon>Vertebrata</taxon>
        <taxon>Euteleostomi</taxon>
        <taxon>Mammalia</taxon>
        <taxon>Eutheria</taxon>
        <taxon>Euarchontoglires</taxon>
        <taxon>Glires</taxon>
        <taxon>Rodentia</taxon>
        <taxon>Myomorpha</taxon>
        <taxon>Muroidea</taxon>
        <taxon>Muridae</taxon>
        <taxon>Murinae</taxon>
        <taxon>Rattus</taxon>
    </lineage>
</organism>
<comment type="function">
    <text evidence="1 3 5 6">Catalyzes alpha(1-&gt;3) linkage of fucosyl moiety transferred from GDP-beta-L-fucose to N-acetyl glucosamine (GlcNAc) within type 2 lactosamine (LacNAc, beta-D-Gal-(1-&gt;4)-beta-D-GlcNAc-) glycan attached to glycolipids and N- or O-linked glycoproteins. Fucosylates distal type 2 LacNAc and its fucosylated (H-type 2 LacNAc) and sialylated (sialyl-type 2 LacNAc) derivatives to form Lewis x (Lex) (CD15) and Lewis y (Ley) antigenic epitopes involved in cell adhesion and differentiation (By similarity) (PubMed:11020213, PubMed:11675393). Generates Lex epitopes in the brain, presumably playing a role in the maintenance of neuronal stemness and neurite outgrowth in progenitor neural cells (By similarity). Fucosylates the internal type 2 LacNAc unit of the polylactosamine chain to form VIM-2 antigen that serves as recognition epitope for SELE (By similarity). Can also modify milk oligosaccharides in particular type 2 tetrasaccharide LNnT (By similarity).</text>
</comment>
<comment type="catalytic activity">
    <reaction evidence="5 6">
        <text>a beta-D-galactosyl-(1-&gt;4)-N-acetyl-beta-D-glucosaminyl derivative + GDP-beta-L-fucose = a beta-D-galactosyl-(1-&gt;4)-[alpha-L-fucosyl-(1-&gt;3)]-N-acetyl-beta-D-glucosaminyl derivative + GDP + H(+)</text>
        <dbReference type="Rhea" id="RHEA:14257"/>
        <dbReference type="ChEBI" id="CHEBI:15378"/>
        <dbReference type="ChEBI" id="CHEBI:57273"/>
        <dbReference type="ChEBI" id="CHEBI:58189"/>
        <dbReference type="ChEBI" id="CHEBI:133507"/>
        <dbReference type="ChEBI" id="CHEBI:137941"/>
        <dbReference type="EC" id="2.4.1.152"/>
    </reaction>
    <physiologicalReaction direction="left-to-right" evidence="5 6">
        <dbReference type="Rhea" id="RHEA:14258"/>
    </physiologicalReaction>
</comment>
<comment type="catalytic activity">
    <reaction evidence="3">
        <text>an alpha-Neu5Ac-(2-&gt;3)-beta-D-Gal-(1-&gt;4)-beta-D-GlcNAc-(1-&gt;3)-beta-D-Gal-(1-&gt;4)-beta-D-GlcNAc derivative + GDP-beta-L-fucose = an alpha-Neu5Ac-(2-&gt;3)-beta-D-Gal-(1-&gt;4)-beta-D-GlcNAc-(1-&gt;3)-beta-D-Gal-(1-&gt;4)-[alpha-L-Fuc-(1-&gt;3)]-beta-D-GlcNAc derivative + GDP + H(+)</text>
        <dbReference type="Rhea" id="RHEA:68044"/>
        <dbReference type="ChEBI" id="CHEBI:15378"/>
        <dbReference type="ChEBI" id="CHEBI:57273"/>
        <dbReference type="ChEBI" id="CHEBI:58189"/>
        <dbReference type="ChEBI" id="CHEBI:145343"/>
        <dbReference type="ChEBI" id="CHEBI:176900"/>
    </reaction>
    <physiologicalReaction direction="left-to-right" evidence="3">
        <dbReference type="Rhea" id="RHEA:68045"/>
    </physiologicalReaction>
</comment>
<comment type="catalytic activity">
    <reaction evidence="1">
        <text>alpha-N-glycoloylneuraminosyl-(2-&gt;3)-beta-D-galactosyl-(1-&gt;4)-N-acetyl-beta-D-glucosaminyl-(1-&gt;3)-beta-D-galactosyl-(1-&gt;4)-N-acetyl-beta-D-glucosaminyl-(1-&gt;3)-beta-D-galactosyl-(1-&gt;4)-beta-D-glucosyl-(1&lt;-&gt;1')-ceramide + GDP-beta-L-fucose = alpha-N-glycoloylneuraminosyl-(2-&gt;3)-beta-D-galactosyl-(1-&gt;4)-N-acetyl-beta-D-glucosaminyl-(1-&gt;3)-beta-D-galactosyl-(1-&gt;4)-[alpha-L-fucosyl-(1-&gt;3)]-N-acetyl-beta-D-glucosaminyl-(1-&gt;3)-beta-D-galactosyl-(1-&gt;4)-beta-D-glucosyl-(1&lt;-&gt;1')-ceramide + GDP + H(+)</text>
        <dbReference type="Rhea" id="RHEA:48388"/>
        <dbReference type="ChEBI" id="CHEBI:15378"/>
        <dbReference type="ChEBI" id="CHEBI:57273"/>
        <dbReference type="ChEBI" id="CHEBI:58189"/>
        <dbReference type="ChEBI" id="CHEBI:90383"/>
        <dbReference type="ChEBI" id="CHEBI:90384"/>
    </reaction>
    <physiologicalReaction direction="left-to-right" evidence="1">
        <dbReference type="Rhea" id="RHEA:48389"/>
    </physiologicalReaction>
</comment>
<comment type="catalytic activity">
    <reaction evidence="1">
        <text>alpha-D-galactosyl-(1-&gt;3)-beta-D-galactosyl-(1-&gt;4)-N-acetyl-beta-D-glucosaminyl-(1-&gt;3)-beta-D-galactosyl-(1-&gt;4)-beta-D-glucosyl-(1&lt;-&gt;1')-ceramide + GDP-beta-L-fucose = a neolactoside IV(3)-alpha-Gal,III(3)-alpha-Fuc-nLc4Cer + GDP + H(+)</text>
        <dbReference type="Rhea" id="RHEA:48380"/>
        <dbReference type="ChEBI" id="CHEBI:15378"/>
        <dbReference type="ChEBI" id="CHEBI:57273"/>
        <dbReference type="ChEBI" id="CHEBI:58189"/>
        <dbReference type="ChEBI" id="CHEBI:90380"/>
        <dbReference type="ChEBI" id="CHEBI:90381"/>
    </reaction>
    <physiologicalReaction direction="left-to-right" evidence="1">
        <dbReference type="Rhea" id="RHEA:48381"/>
    </physiologicalReaction>
</comment>
<comment type="catalytic activity">
    <reaction evidence="5 6">
        <text>a neolactoside nLc4Cer + GDP-beta-L-fucose = a neolactoside III(3)-alpha-Fuc-nLc4Cer + GDP + H(+)</text>
        <dbReference type="Rhea" id="RHEA:48376"/>
        <dbReference type="ChEBI" id="CHEBI:15378"/>
        <dbReference type="ChEBI" id="CHEBI:57273"/>
        <dbReference type="ChEBI" id="CHEBI:58189"/>
        <dbReference type="ChEBI" id="CHEBI:90376"/>
        <dbReference type="ChEBI" id="CHEBI:90379"/>
    </reaction>
    <physiologicalReaction direction="left-to-right" evidence="5 6">
        <dbReference type="Rhea" id="RHEA:48377"/>
    </physiologicalReaction>
</comment>
<comment type="catalytic activity">
    <reaction evidence="3">
        <text>an N-acetyl-alpha-neuraminyl-(2-&gt;3)-beta-D-galactosyl-(1-&gt;4)-N-acetyl-beta-D-glucosaminyl derivative + GDP-beta-L-fucose = an alpha-Neu5Ac-(2-&gt;3)-beta-D-Gal-(1-&gt;4)-[alpha-L-Fuc-(1-&gt;3)]-beta-D-GlcNAc derivative + GDP + H(+)</text>
        <dbReference type="Rhea" id="RHEA:56076"/>
        <dbReference type="ChEBI" id="CHEBI:15378"/>
        <dbReference type="ChEBI" id="CHEBI:57273"/>
        <dbReference type="ChEBI" id="CHEBI:58189"/>
        <dbReference type="ChEBI" id="CHEBI:136545"/>
        <dbReference type="ChEBI" id="CHEBI:139509"/>
    </reaction>
    <physiologicalReaction direction="left-to-right" evidence="3">
        <dbReference type="Rhea" id="RHEA:56077"/>
    </physiologicalReaction>
</comment>
<comment type="catalytic activity">
    <reaction evidence="3">
        <text>beta-D-Gal-(1-&gt;4)-beta-D-GlcNAc-(1-&gt;3)-beta-D-Gal-(1-&gt;4)-D-Glc + GDP-beta-L-fucose = beta-D-Gal-(1-&gt;4)-[alpha-L-Fuc-(1-&gt;3)]-beta-D-GlcNAc-(1-&gt;3)-beta-D-Gal-(1-&gt;4)-D-Glc + GDP + H(+)</text>
        <dbReference type="Rhea" id="RHEA:77187"/>
        <dbReference type="ChEBI" id="CHEBI:15378"/>
        <dbReference type="ChEBI" id="CHEBI:57273"/>
        <dbReference type="ChEBI" id="CHEBI:58189"/>
        <dbReference type="ChEBI" id="CHEBI:60239"/>
        <dbReference type="ChEBI" id="CHEBI:61352"/>
    </reaction>
    <physiologicalReaction direction="left-to-right" evidence="3">
        <dbReference type="Rhea" id="RHEA:77188"/>
    </physiologicalReaction>
</comment>
<comment type="catalytic activity">
    <reaction evidence="3">
        <text>an alpha-L-Fuc-(1-&gt;2)-beta-D-Gal-(1-&gt;4)-beta-D-GlcNAc derivative + GDP-beta-L-fucose = an alpha-L-Fuc-(1-&gt;2)-beta-D-Gal-(1-&gt;4)-[alpha-L-Fuc-(1-&gt;3)]-beta-D-GlcNAc derivative + GDP + H(+)</text>
        <dbReference type="Rhea" id="RHEA:77191"/>
        <dbReference type="ChEBI" id="CHEBI:15378"/>
        <dbReference type="ChEBI" id="CHEBI:57273"/>
        <dbReference type="ChEBI" id="CHEBI:58189"/>
        <dbReference type="ChEBI" id="CHEBI:133510"/>
        <dbReference type="ChEBI" id="CHEBI:195560"/>
    </reaction>
    <physiologicalReaction direction="left-to-right" evidence="3">
        <dbReference type="Rhea" id="RHEA:77192"/>
    </physiologicalReaction>
</comment>
<comment type="activity regulation">
    <text evidence="3">Activated by Mn2+.</text>
</comment>
<comment type="pathway">
    <text evidence="1 3">Protein modification; protein glycosylation.</text>
</comment>
<comment type="pathway">
    <text evidence="1">Glycolipid biosynthesis.</text>
</comment>
<comment type="subunit">
    <text evidence="3">Homodimer.</text>
</comment>
<comment type="subcellular location">
    <subcellularLocation>
        <location evidence="3">Golgi apparatus</location>
        <location evidence="3">trans-Golgi network membrane</location>
        <topology evidence="2">Single-pass type II membrane protein</topology>
    </subcellularLocation>
    <subcellularLocation>
        <location evidence="1">Golgi apparatus membrane</location>
    </subcellularLocation>
</comment>
<comment type="domain">
    <text evidence="3">The donor-binding domain adopts a Rossman-like fold involved in GDP-beta-L-fucose sugar donor interactions.</text>
</comment>
<comment type="domain">
    <text evidence="3">The acceptor-binding domain adopts a Rossman-like fold consisting of six-stranded parallel beta sheets characteristic of the Toll/interleukin-1 receptor (TIR) fold family. Interacts with the LacNAc unit of type 2 LacNAc and H-type 2 LacNAc structures. It contains the catalytic base Glu-137 which deprotonates the hydroxyl group of GlcNAc while forming bridging interactions with the donor sugar to position the catalytic machinery in the active site.</text>
</comment>
<comment type="PTM">
    <text evidence="3">N-glycosylated with complex-type N-glycans.</text>
</comment>
<comment type="similarity">
    <text evidence="9">Belongs to the glycosyltransferase 10 family.</text>
</comment>
<name>FUT9_RAT</name>
<accession>Q99JB3</accession>
<dbReference type="EC" id="2.4.1.152" evidence="5 6"/>
<dbReference type="EMBL" id="AB049819">
    <property type="protein sequence ID" value="BAB40953.1"/>
    <property type="molecule type" value="mRNA"/>
</dbReference>
<dbReference type="EMBL" id="AF345993">
    <property type="protein sequence ID" value="AAK16591.1"/>
    <property type="molecule type" value="mRNA"/>
</dbReference>
<dbReference type="RefSeq" id="NP_445917.1">
    <property type="nucleotide sequence ID" value="NM_053465.2"/>
</dbReference>
<dbReference type="RefSeq" id="XP_038966805.1">
    <property type="nucleotide sequence ID" value="XM_039110877.2"/>
</dbReference>
<dbReference type="SMR" id="Q99JB3"/>
<dbReference type="FunCoup" id="Q99JB3">
    <property type="interactions" value="509"/>
</dbReference>
<dbReference type="STRING" id="10116.ENSRNOP00000011393"/>
<dbReference type="CAZy" id="GT10">
    <property type="family name" value="Glycosyltransferase Family 10"/>
</dbReference>
<dbReference type="GlyCosmos" id="Q99JB3">
    <property type="glycosylation" value="3 sites, No reported glycans"/>
</dbReference>
<dbReference type="GlyGen" id="Q99JB3">
    <property type="glycosylation" value="4 sites"/>
</dbReference>
<dbReference type="PhosphoSitePlus" id="Q99JB3"/>
<dbReference type="PaxDb" id="10116-ENSRNOP00000011393"/>
<dbReference type="Ensembl" id="ENSRNOT00000113229.1">
    <property type="protein sequence ID" value="ENSRNOP00000087361.1"/>
    <property type="gene ID" value="ENSRNOG00000070149.1"/>
</dbReference>
<dbReference type="GeneID" id="84597"/>
<dbReference type="KEGG" id="rno:84597"/>
<dbReference type="UCSC" id="RGD:619955">
    <property type="organism name" value="rat"/>
</dbReference>
<dbReference type="AGR" id="RGD:619955"/>
<dbReference type="CTD" id="10690"/>
<dbReference type="RGD" id="619955">
    <property type="gene designation" value="Fut9"/>
</dbReference>
<dbReference type="eggNOG" id="KOG2619">
    <property type="taxonomic scope" value="Eukaryota"/>
</dbReference>
<dbReference type="GeneTree" id="ENSGT00940000155095"/>
<dbReference type="HOGENOM" id="CLU_032075_4_2_1"/>
<dbReference type="InParanoid" id="Q99JB3"/>
<dbReference type="OMA" id="FRKWDSQ"/>
<dbReference type="OrthoDB" id="427096at2759"/>
<dbReference type="PhylomeDB" id="Q99JB3"/>
<dbReference type="TreeFam" id="TF316348"/>
<dbReference type="Reactome" id="R-RNO-9037629">
    <property type="pathway name" value="Lewis blood group biosynthesis"/>
</dbReference>
<dbReference type="UniPathway" id="UPA00378"/>
<dbReference type="PRO" id="PR:Q99JB3"/>
<dbReference type="Proteomes" id="UP000002494">
    <property type="component" value="Chromosome 5"/>
</dbReference>
<dbReference type="Bgee" id="ENSRNOG00000008475">
    <property type="expression patterns" value="Expressed in frontal cortex and 4 other cell types or tissues"/>
</dbReference>
<dbReference type="GO" id="GO:0005794">
    <property type="term" value="C:Golgi apparatus"/>
    <property type="evidence" value="ECO:0000250"/>
    <property type="project" value="UniProtKB"/>
</dbReference>
<dbReference type="GO" id="GO:0000139">
    <property type="term" value="C:Golgi membrane"/>
    <property type="evidence" value="ECO:0007669"/>
    <property type="project" value="UniProtKB-SubCell"/>
</dbReference>
<dbReference type="GO" id="GO:0005802">
    <property type="term" value="C:trans-Golgi network"/>
    <property type="evidence" value="ECO:0000250"/>
    <property type="project" value="UniProtKB"/>
</dbReference>
<dbReference type="GO" id="GO:0032588">
    <property type="term" value="C:trans-Golgi network membrane"/>
    <property type="evidence" value="ECO:0000250"/>
    <property type="project" value="UniProtKB"/>
</dbReference>
<dbReference type="GO" id="GO:0017083">
    <property type="term" value="F:4-galactosyl-N-acetylglucosaminide 3-alpha-L-fucosyltransferase activity"/>
    <property type="evidence" value="ECO:0000250"/>
    <property type="project" value="UniProtKB"/>
</dbReference>
<dbReference type="GO" id="GO:0046920">
    <property type="term" value="F:alpha-(1-&gt;3)-fucosyltransferase activity"/>
    <property type="evidence" value="ECO:0000266"/>
    <property type="project" value="RGD"/>
</dbReference>
<dbReference type="GO" id="GO:0008417">
    <property type="term" value="F:fucosyltransferase activity"/>
    <property type="evidence" value="ECO:0000303"/>
    <property type="project" value="RGD"/>
</dbReference>
<dbReference type="GO" id="GO:0042803">
    <property type="term" value="F:protein homodimerization activity"/>
    <property type="evidence" value="ECO:0000250"/>
    <property type="project" value="UniProtKB"/>
</dbReference>
<dbReference type="GO" id="GO:0036065">
    <property type="term" value="P:fucosylation"/>
    <property type="evidence" value="ECO:0000250"/>
    <property type="project" value="UniProtKB"/>
</dbReference>
<dbReference type="GO" id="GO:0006688">
    <property type="term" value="P:glycosphingolipid biosynthetic process"/>
    <property type="evidence" value="ECO:0000250"/>
    <property type="project" value="UniProtKB"/>
</dbReference>
<dbReference type="GO" id="GO:0106402">
    <property type="term" value="P:Lewis x epitope biosynthetic process"/>
    <property type="evidence" value="ECO:0000250"/>
    <property type="project" value="UniProtKB"/>
</dbReference>
<dbReference type="GO" id="GO:0036071">
    <property type="term" value="P:N-glycan fucosylation"/>
    <property type="evidence" value="ECO:0000266"/>
    <property type="project" value="RGD"/>
</dbReference>
<dbReference type="GO" id="GO:0007399">
    <property type="term" value="P:nervous system development"/>
    <property type="evidence" value="ECO:0000314"/>
    <property type="project" value="RGD"/>
</dbReference>
<dbReference type="GO" id="GO:0030182">
    <property type="term" value="P:neuron differentiation"/>
    <property type="evidence" value="ECO:0000250"/>
    <property type="project" value="UniProtKB"/>
</dbReference>
<dbReference type="GO" id="GO:0036445">
    <property type="term" value="P:neuronal stem cell division"/>
    <property type="evidence" value="ECO:0000250"/>
    <property type="project" value="UniProtKB"/>
</dbReference>
<dbReference type="GO" id="GO:0009312">
    <property type="term" value="P:oligosaccharide biosynthetic process"/>
    <property type="evidence" value="ECO:0000266"/>
    <property type="project" value="RGD"/>
</dbReference>
<dbReference type="GO" id="GO:0000271">
    <property type="term" value="P:polysaccharide biosynthetic process"/>
    <property type="evidence" value="ECO:0000250"/>
    <property type="project" value="UniProtKB"/>
</dbReference>
<dbReference type="GO" id="GO:0010976">
    <property type="term" value="P:positive regulation of neuron projection development"/>
    <property type="evidence" value="ECO:0000250"/>
    <property type="project" value="UniProtKB"/>
</dbReference>
<dbReference type="GO" id="GO:0006486">
    <property type="term" value="P:protein glycosylation"/>
    <property type="evidence" value="ECO:0000266"/>
    <property type="project" value="RGD"/>
</dbReference>
<dbReference type="GO" id="GO:0006487">
    <property type="term" value="P:protein N-linked glycosylation"/>
    <property type="evidence" value="ECO:0000250"/>
    <property type="project" value="UniProtKB"/>
</dbReference>
<dbReference type="GO" id="GO:0006493">
    <property type="term" value="P:protein O-linked glycosylation"/>
    <property type="evidence" value="ECO:0000250"/>
    <property type="project" value="UniProtKB"/>
</dbReference>
<dbReference type="GO" id="GO:1903037">
    <property type="term" value="P:regulation of leukocyte cell-cell adhesion"/>
    <property type="evidence" value="ECO:0000250"/>
    <property type="project" value="UniProtKB"/>
</dbReference>
<dbReference type="GO" id="GO:1903236">
    <property type="term" value="P:regulation of leukocyte tethering or rolling"/>
    <property type="evidence" value="ECO:0000250"/>
    <property type="project" value="UniProtKB"/>
</dbReference>
<dbReference type="FunFam" id="3.40.50.11660:FF:000001">
    <property type="entry name" value="alpha-(1,3)-fucosyltransferase 9"/>
    <property type="match status" value="1"/>
</dbReference>
<dbReference type="Gene3D" id="3.40.50.11660">
    <property type="entry name" value="Glycosyl transferase family 10, C-terminal domain"/>
    <property type="match status" value="1"/>
</dbReference>
<dbReference type="InterPro" id="IPR055270">
    <property type="entry name" value="Glyco_tran_10_C"/>
</dbReference>
<dbReference type="InterPro" id="IPR031481">
    <property type="entry name" value="Glyco_tran_10_N"/>
</dbReference>
<dbReference type="InterPro" id="IPR001503">
    <property type="entry name" value="Glyco_trans_10"/>
</dbReference>
<dbReference type="InterPro" id="IPR038577">
    <property type="entry name" value="GT10-like_C_sf"/>
</dbReference>
<dbReference type="PANTHER" id="PTHR11929:SF10">
    <property type="entry name" value="4-GALACTOSYL-N-ACETYLGLUCOSAMINIDE 3-ALPHA-L-FUCOSYLTRANSFERASE 9"/>
    <property type="match status" value="1"/>
</dbReference>
<dbReference type="PANTHER" id="PTHR11929">
    <property type="entry name" value="ALPHA- 1,3 -FUCOSYLTRANSFERASE"/>
    <property type="match status" value="1"/>
</dbReference>
<dbReference type="Pfam" id="PF17039">
    <property type="entry name" value="Glyco_tran_10_N"/>
    <property type="match status" value="1"/>
</dbReference>
<dbReference type="Pfam" id="PF00852">
    <property type="entry name" value="Glyco_transf_10"/>
    <property type="match status" value="1"/>
</dbReference>
<dbReference type="SUPFAM" id="SSF53756">
    <property type="entry name" value="UDP-Glycosyltransferase/glycogen phosphorylase"/>
    <property type="match status" value="1"/>
</dbReference>
<reference key="1">
    <citation type="journal article" date="2002" name="J. Biol. Chem.">
        <title>Pax6 controls the expression of Lewis x epitope in the embryonic forebrain by regulating alpha 1,3-fucosyltransferase IX expression.</title>
        <authorList>
            <person name="Shimoda Y."/>
            <person name="Tajima Y."/>
            <person name="Osanai T."/>
            <person name="Katsume A."/>
            <person name="Kohara M."/>
            <person name="Kudo T."/>
            <person name="Narimatsu H."/>
            <person name="Takashima N."/>
            <person name="Ishii Y."/>
            <person name="Nakamura S."/>
            <person name="Osumi N."/>
            <person name="Sanai Y."/>
        </authorList>
    </citation>
    <scope>NUCLEOTIDE SEQUENCE [MRNA]</scope>
    <scope>FUNCTION</scope>
    <scope>CATALYTIC ACTIVITY</scope>
</reference>
<reference key="2">
    <citation type="journal article" date="2000" name="J. Neurosci. Res.">
        <title>Molecular cloning of rat alpha1,3-fucosyltransferase IX (Fuc-TIX) and comparison of the expression of Fuc-TIV and Fuc-TIX genes during rat postnatal cerebellum development.</title>
        <authorList>
            <person name="Baboval T."/>
            <person name="Henion T."/>
            <person name="Kinnally E."/>
            <person name="Smith F.I."/>
        </authorList>
    </citation>
    <scope>NUCLEOTIDE SEQUENCE [MRNA]</scope>
    <scope>FUNCTION</scope>
    <scope>CATALYTIC ACTIVITY</scope>
    <source>
        <strain>Sprague-Dawley</strain>
    </source>
</reference>
<sequence length="359" mass="42037">MTSTSKGILRPFLIVCIILGCFVACLLIYIKPTNSWVFSPMESASSVLKMKNFFSRKTDYFNETTILVWVWPFGQTFDLTSCQAMFNIQGCHLTTDRSLYNKSHAVLIHHRDISWDLTNLPQQARPPFQKWIWMNLESPTHTPQKSGIEHLFNLTLTYRRDSDIQVPYGFLTVSTSPFVFEVPSKEKLVCWVVSNWNPEHARVKYYNELSKSIEIHTYGQAFGEYVNDKNLIPTISTCKFYLSFENSIHKDYITEKLYNAFLAGSVPVVLGPSRENYENYIPADSFIHVEDFNSPSELAKYLKEVDKNNKLYLSYFNWRKDFTVNLPRFWESHACLACDHVKRHQEYKSVGNLEKWFWN</sequence>
<evidence type="ECO:0000250" key="1">
    <source>
        <dbReference type="UniProtKB" id="O88819"/>
    </source>
</evidence>
<evidence type="ECO:0000250" key="2">
    <source>
        <dbReference type="UniProtKB" id="Q6P4F1"/>
    </source>
</evidence>
<evidence type="ECO:0000250" key="3">
    <source>
        <dbReference type="UniProtKB" id="Q9Y231"/>
    </source>
</evidence>
<evidence type="ECO:0000255" key="4"/>
<evidence type="ECO:0000269" key="5">
    <source>
    </source>
</evidence>
<evidence type="ECO:0000269" key="6">
    <source>
    </source>
</evidence>
<evidence type="ECO:0000303" key="7">
    <source>
    </source>
</evidence>
<evidence type="ECO:0000303" key="8">
    <source>
    </source>
</evidence>
<evidence type="ECO:0000305" key="9"/>
<evidence type="ECO:0000312" key="10">
    <source>
        <dbReference type="RGD" id="619955"/>
    </source>
</evidence>
<gene>
    <name evidence="10" type="primary">Fut9</name>
</gene>
<proteinExistence type="evidence at protein level"/>
<protein>
    <recommendedName>
        <fullName evidence="9">4-galactosyl-N-acetylglucosaminide 3-alpha-L-fucosyltransferase 9</fullName>
        <ecNumber evidence="5 6">2.4.1.152</ecNumber>
    </recommendedName>
    <alternativeName>
        <fullName>Fucosyltransferase 9</fullName>
    </alternativeName>
    <alternativeName>
        <fullName evidence="7 8">Fucosyltransferase IX</fullName>
        <shortName evidence="7">Fuc-TIX</shortName>
        <shortName>FucT-IX</shortName>
    </alternativeName>
    <alternativeName>
        <fullName>Galactoside 3-L-fucosyltransferase</fullName>
    </alternativeName>
</protein>